<proteinExistence type="inferred from homology"/>
<gene>
    <name type="primary">glaB</name>
    <name type="ordered locus">BT_4251</name>
</gene>
<evidence type="ECO:0000250" key="1">
    <source>
        <dbReference type="UniProtKB" id="Q5LGZ8"/>
    </source>
</evidence>
<evidence type="ECO:0000255" key="2"/>
<evidence type="ECO:0000269" key="3">
    <source>
    </source>
</evidence>
<evidence type="ECO:0000305" key="4"/>
<dbReference type="EC" id="3.2.1.n1" evidence="3"/>
<dbReference type="EC" id="3.2.1.n2" evidence="3"/>
<dbReference type="EC" id="3.2.1.22" evidence="3"/>
<dbReference type="EMBL" id="AM109957">
    <property type="protein sequence ID" value="CAJ33353.1"/>
    <property type="molecule type" value="Genomic_DNA"/>
</dbReference>
<dbReference type="EMBL" id="AE015928">
    <property type="protein sequence ID" value="AAO79356.1"/>
    <property type="molecule type" value="Genomic_DNA"/>
</dbReference>
<dbReference type="RefSeq" id="NP_813162.1">
    <property type="nucleotide sequence ID" value="NC_004663.1"/>
</dbReference>
<dbReference type="RefSeq" id="WP_008764450.1">
    <property type="nucleotide sequence ID" value="NC_004663.1"/>
</dbReference>
<dbReference type="SMR" id="Q89ZX0"/>
<dbReference type="STRING" id="226186.BT_4251"/>
<dbReference type="CAZy" id="GH110">
    <property type="family name" value="Glycoside Hydrolase Family 110"/>
</dbReference>
<dbReference type="PaxDb" id="226186-BT_4251"/>
<dbReference type="DNASU" id="1074743"/>
<dbReference type="EnsemblBacteria" id="AAO79356">
    <property type="protein sequence ID" value="AAO79356"/>
    <property type="gene ID" value="BT_4251"/>
</dbReference>
<dbReference type="KEGG" id="bth:BT_4251"/>
<dbReference type="PATRIC" id="fig|226186.12.peg.4322"/>
<dbReference type="eggNOG" id="COG5434">
    <property type="taxonomic scope" value="Bacteria"/>
</dbReference>
<dbReference type="HOGENOM" id="CLU_017693_0_0_10"/>
<dbReference type="InParanoid" id="Q89ZX0"/>
<dbReference type="OrthoDB" id="9807299at2"/>
<dbReference type="Proteomes" id="UP000001414">
    <property type="component" value="Chromosome"/>
</dbReference>
<dbReference type="GO" id="GO:0004557">
    <property type="term" value="F:alpha-galactosidase activity"/>
    <property type="evidence" value="ECO:0007669"/>
    <property type="project" value="UniProtKB-EC"/>
</dbReference>
<dbReference type="Gene3D" id="2.160.20.10">
    <property type="entry name" value="Single-stranded right-handed beta-helix, Pectin lyase-like"/>
    <property type="match status" value="3"/>
</dbReference>
<dbReference type="InterPro" id="IPR056441">
    <property type="entry name" value="Beta-barrel_GLAA-B_II"/>
</dbReference>
<dbReference type="InterPro" id="IPR039448">
    <property type="entry name" value="Beta_helix"/>
</dbReference>
<dbReference type="InterPro" id="IPR006626">
    <property type="entry name" value="PbH1"/>
</dbReference>
<dbReference type="InterPro" id="IPR012334">
    <property type="entry name" value="Pectin_lyas_fold"/>
</dbReference>
<dbReference type="InterPro" id="IPR011050">
    <property type="entry name" value="Pectin_lyase_fold/virulence"/>
</dbReference>
<dbReference type="Pfam" id="PF23763">
    <property type="entry name" value="Beta-barrel_GLAA-B_I"/>
    <property type="match status" value="1"/>
</dbReference>
<dbReference type="Pfam" id="PF23764">
    <property type="entry name" value="Beta-barrel_GLAA-B_II"/>
    <property type="match status" value="1"/>
</dbReference>
<dbReference type="Pfam" id="PF13229">
    <property type="entry name" value="Beta_helix"/>
    <property type="match status" value="1"/>
</dbReference>
<dbReference type="SMART" id="SM00710">
    <property type="entry name" value="PbH1"/>
    <property type="match status" value="6"/>
</dbReference>
<dbReference type="SUPFAM" id="SSF51126">
    <property type="entry name" value="Pectin lyase-like"/>
    <property type="match status" value="1"/>
</dbReference>
<sequence>MRTFLSLKTCLLSALLLCVNSIAASKIISVSDFGLKPDSRINAVPFIQKAIDACKQHPGSTLVFPKGRYDFWAQHAIEKDYYETNTYDVNPKILAVLLEQINDLTIDGNGSEFIMHGRMQPFTLDHCRNITLKNFSVDWEIPLTAQGIVTQSTSEYLEIEIDSHQYPYIIENKRLTFVGEGWKSSLWAIMQFDPDTHLVLPNTGDNLGWRSYDATEINPGLIRLSDPKKEADKFFPAPGTVLVLRHSTRDHAGIFIYHSMDTKLENVKLFHTCGLGILSQYSKNISFNDVHIIPNTSKKRVLSGHDDGFHFMGCSGLLKIENCSWAGLMDDPINIHGTCSRIMEVLSPTRIKCKFMQDMSEGMEWGRPDETIGFIEHKTMRTVATGKMNKFEALNKAEFIIELSVPLPAGVEAGYVIENLTCTPDAEIRNCHFGSCRARGLLVSTPGKVIIENNVFESSGSAILIAGDANAWYESGAVKDVLIRNNDFRYPCNSSIYQFCEAVISIDPEIPTPEQKYPYHRNIRIMDNTFHLFDYPILFARSVNGLTFSSNTLIRDTTYQPYHYRKEGITLEACKSVVISNNKIEGDVLGRIVTIEKMKPSDVKISKNPFFKLKK</sequence>
<protein>
    <recommendedName>
        <fullName>Alpha-1,3-galactosidase B</fullName>
        <ecNumber evidence="3">3.2.1.n1</ecNumber>
        <ecNumber evidence="3">3.2.1.n2</ecNumber>
    </recommendedName>
    <alternativeName>
        <fullName>BtGal110B</fullName>
    </alternativeName>
    <alternativeName>
        <fullName>Exo-alpha-galactosidase B</fullName>
        <ecNumber evidence="3">3.2.1.22</ecNumber>
    </alternativeName>
</protein>
<accession>Q89ZX0</accession>
<reference key="1">
    <citation type="journal article" date="2007" name="Nat. Biotechnol.">
        <title>Bacterial glycosidases for the production of universal red blood cells.</title>
        <authorList>
            <person name="Liu Q.P."/>
            <person name="Sulzenbacher G."/>
            <person name="Yuan H."/>
            <person name="Bennett E.P."/>
            <person name="Pietz G."/>
            <person name="Saunders K."/>
            <person name="Spence J."/>
            <person name="Nudelman E."/>
            <person name="Levery S.B."/>
            <person name="White T."/>
            <person name="Neveu J.M."/>
            <person name="Lane W.S."/>
            <person name="Bourne Y."/>
            <person name="Olsson M.L."/>
            <person name="Henrissat B."/>
            <person name="Clausen H."/>
        </authorList>
    </citation>
    <scope>NUCLEOTIDE SEQUENCE [GENOMIC DNA]</scope>
</reference>
<reference key="2">
    <citation type="journal article" date="2003" name="Science">
        <title>A genomic view of the human-Bacteroides thetaiotaomicron symbiosis.</title>
        <authorList>
            <person name="Xu J."/>
            <person name="Bjursell M.K."/>
            <person name="Himrod J."/>
            <person name="Deng S."/>
            <person name="Carmichael L.K."/>
            <person name="Chiang H.C."/>
            <person name="Hooper L.V."/>
            <person name="Gordon J.I."/>
        </authorList>
    </citation>
    <scope>NUCLEOTIDE SEQUENCE [LARGE SCALE GENOMIC DNA]</scope>
    <source>
        <strain>ATCC 29148 / DSM 2079 / JCM 5827 / CCUG 10774 / NCTC 10582 / VPI-5482 / E50</strain>
    </source>
</reference>
<reference key="3">
    <citation type="journal article" date="2008" name="J. Biol. Chem.">
        <title>Identification of a GH110 subfamily of alpha1,3-galactosidases: novel enzymes for removal of the alpha3Gal xenotransplantation antigen.</title>
        <authorList>
            <person name="Liu Q.P."/>
            <person name="Yuan H."/>
            <person name="Bennett E.P."/>
            <person name="Levery S.B."/>
            <person name="Nudelman E."/>
            <person name="Spence J."/>
            <person name="Pietz G."/>
            <person name="Saunders K."/>
            <person name="White T."/>
            <person name="Olsson M.L."/>
            <person name="Henrissat B."/>
            <person name="Sulzenbacher G."/>
            <person name="Clausen H."/>
        </authorList>
    </citation>
    <scope>ENZYME ACTIVITY</scope>
</reference>
<comment type="function">
    <text evidence="1">Alpha-galactosidase. Removes both branched alpha-1,3-linked galactose residues of blood group B antigens and linear alpha-1,3-linked galactose structures.</text>
</comment>
<comment type="catalytic activity">
    <reaction evidence="3">
        <text>Hydrolysis of terminal, non-reducing branched (1-&gt;3)-alpha-D-galactosidic residues, producing free D-galactose.</text>
        <dbReference type="EC" id="3.2.1.n1"/>
    </reaction>
</comment>
<comment type="catalytic activity">
    <reaction evidence="3">
        <text>Hydrolysis of terminal, non-reducing linear (1-&gt;3)-alpha-D-galactosidic residues, producing free D-galactose.</text>
        <dbReference type="EC" id="3.2.1.n2"/>
    </reaction>
</comment>
<comment type="catalytic activity">
    <reaction evidence="3">
        <text>Hydrolysis of terminal, non-reducing alpha-D-galactose residues in alpha-D-galactosides, including galactose oligosaccharides, galactomannans and galactolipids.</text>
        <dbReference type="EC" id="3.2.1.22"/>
    </reaction>
</comment>
<comment type="similarity">
    <text evidence="4">Belongs to the glycosyl hydrolase 110 family. B subfamily.</text>
</comment>
<name>GLAB_BACTN</name>
<organism>
    <name type="scientific">Bacteroides thetaiotaomicron (strain ATCC 29148 / DSM 2079 / JCM 5827 / CCUG 10774 / NCTC 10582 / VPI-5482 / E50)</name>
    <dbReference type="NCBI Taxonomy" id="226186"/>
    <lineage>
        <taxon>Bacteria</taxon>
        <taxon>Pseudomonadati</taxon>
        <taxon>Bacteroidota</taxon>
        <taxon>Bacteroidia</taxon>
        <taxon>Bacteroidales</taxon>
        <taxon>Bacteroidaceae</taxon>
        <taxon>Bacteroides</taxon>
    </lineage>
</organism>
<feature type="signal peptide" evidence="2">
    <location>
        <begin position="1"/>
        <end position="23"/>
    </location>
</feature>
<feature type="chain" id="PRO_0000348478" description="Alpha-1,3-galactosidase B">
    <location>
        <begin position="24"/>
        <end position="615"/>
    </location>
</feature>
<feature type="repeat" description="PbH1 1">
    <location>
        <begin position="282"/>
        <end position="313"/>
    </location>
</feature>
<feature type="repeat" description="PbH1 2">
    <location>
        <begin position="423"/>
        <end position="445"/>
    </location>
</feature>
<feature type="repeat" description="PbH1 3">
    <location>
        <begin position="446"/>
        <end position="467"/>
    </location>
</feature>
<feature type="repeat" description="PbH1 4">
    <location>
        <begin position="478"/>
        <end position="500"/>
    </location>
</feature>
<feature type="repeat" description="PbH1 5">
    <location>
        <begin position="520"/>
        <end position="541"/>
    </location>
</feature>
<feature type="repeat" description="PbH1 6">
    <location>
        <begin position="543"/>
        <end position="573"/>
    </location>
</feature>
<keyword id="KW-0326">Glycosidase</keyword>
<keyword id="KW-0378">Hydrolase</keyword>
<keyword id="KW-1185">Reference proteome</keyword>
<keyword id="KW-0677">Repeat</keyword>
<keyword id="KW-0732">Signal</keyword>